<sequence length="194" mass="23033">MFLTAVNPQPLSTPSWQIETKYSTKVLTGNWMEERRKFTRDTDKTPQSIYRKEYIPFPDHRPDQISRWYGKRKVEGLPYKHLITHHQEPPHRYLISTYDDHYNRHGYNPGLPPLRTWNGQKLLWLPEKSDFPLLAPPTNYGLYEQLKQRQLTPKAGLKQSTYTSSYPRPPLCAMSWREHAVPVPPHRLHPLPHF</sequence>
<comment type="function">
    <text evidence="2">Microtubule inner protein (MIP) part of the dynein-decorated doublet microtubules (DMTs) in cilia axoneme, which is required for motile cilia beating.</text>
</comment>
<comment type="subunit">
    <text evidence="1">Microtubule inner protein component of sperm flagellar doublet microtubules.</text>
</comment>
<comment type="subcellular location">
    <subcellularLocation>
        <location evidence="2">Cytoplasm</location>
        <location evidence="2">Cytoskeleton</location>
        <location evidence="2">Cilium axoneme</location>
    </subcellularLocation>
    <subcellularLocation>
        <location evidence="1">Cytoplasm</location>
        <location evidence="1">Cytoskeleton</location>
        <location evidence="1">Flagellum axoneme</location>
    </subcellularLocation>
</comment>
<comment type="tissue specificity">
    <text evidence="2">Expressed in airway epithelial cells.</text>
</comment>
<proteinExistence type="evidence at protein level"/>
<gene>
    <name evidence="4" type="primary">CFAP107</name>
    <name evidence="4" type="synonym">C1orf158</name>
</gene>
<organism>
    <name type="scientific">Homo sapiens</name>
    <name type="common">Human</name>
    <dbReference type="NCBI Taxonomy" id="9606"/>
    <lineage>
        <taxon>Eukaryota</taxon>
        <taxon>Metazoa</taxon>
        <taxon>Chordata</taxon>
        <taxon>Craniata</taxon>
        <taxon>Vertebrata</taxon>
        <taxon>Euteleostomi</taxon>
        <taxon>Mammalia</taxon>
        <taxon>Eutheria</taxon>
        <taxon>Euarchontoglires</taxon>
        <taxon>Primates</taxon>
        <taxon>Haplorrhini</taxon>
        <taxon>Catarrhini</taxon>
        <taxon>Hominidae</taxon>
        <taxon>Homo</taxon>
    </lineage>
</organism>
<dbReference type="EMBL" id="AL513016">
    <property type="status" value="NOT_ANNOTATED_CDS"/>
    <property type="molecule type" value="Genomic_DNA"/>
</dbReference>
<dbReference type="EMBL" id="BC029894">
    <property type="protein sequence ID" value="AAH29894.1"/>
    <property type="molecule type" value="mRNA"/>
</dbReference>
<dbReference type="CCDS" id="CCDS147.1"/>
<dbReference type="RefSeq" id="NP_689503.3">
    <property type="nucleotide sequence ID" value="NM_152290.4"/>
</dbReference>
<dbReference type="PDB" id="7UNG">
    <property type="method" value="EM"/>
    <property type="resolution" value="3.60 A"/>
    <property type="chains" value="8/9=1-194"/>
</dbReference>
<dbReference type="PDB" id="8J07">
    <property type="method" value="EM"/>
    <property type="resolution" value="4.10 A"/>
    <property type="chains" value="1Y/1Z=1-194"/>
</dbReference>
<dbReference type="PDBsum" id="7UNG"/>
<dbReference type="PDBsum" id="8J07"/>
<dbReference type="EMDB" id="EMD-26624"/>
<dbReference type="EMDB" id="EMD-35888"/>
<dbReference type="SMR" id="Q8N1D5"/>
<dbReference type="BioGRID" id="125012">
    <property type="interactions" value="15"/>
</dbReference>
<dbReference type="FunCoup" id="Q8N1D5">
    <property type="interactions" value="20"/>
</dbReference>
<dbReference type="IntAct" id="Q8N1D5">
    <property type="interactions" value="12"/>
</dbReference>
<dbReference type="STRING" id="9606.ENSP00000477802"/>
<dbReference type="iPTMnet" id="Q8N1D5"/>
<dbReference type="PhosphoSitePlus" id="Q8N1D5"/>
<dbReference type="BioMuta" id="C1orf158"/>
<dbReference type="MassIVE" id="Q8N1D5"/>
<dbReference type="PaxDb" id="9606-ENSP00000477802"/>
<dbReference type="PeptideAtlas" id="Q8N1D5"/>
<dbReference type="ProteomicsDB" id="71588"/>
<dbReference type="Antibodypedia" id="28545">
    <property type="antibodies" value="39 antibodies from 11 providers"/>
</dbReference>
<dbReference type="DNASU" id="93190"/>
<dbReference type="Ensembl" id="ENST00000614859.5">
    <property type="protein sequence ID" value="ENSP00000477802.1"/>
    <property type="gene ID" value="ENSG00000157330.10"/>
</dbReference>
<dbReference type="GeneID" id="93190"/>
<dbReference type="KEGG" id="hsa:93190"/>
<dbReference type="MANE-Select" id="ENST00000614859.5">
    <property type="protein sequence ID" value="ENSP00000477802.1"/>
    <property type="RefSeq nucleotide sequence ID" value="NM_152290.4"/>
    <property type="RefSeq protein sequence ID" value="NP_689503.3"/>
</dbReference>
<dbReference type="UCSC" id="uc001auh.4">
    <property type="organism name" value="human"/>
</dbReference>
<dbReference type="AGR" id="HGNC:28567"/>
<dbReference type="CTD" id="93190"/>
<dbReference type="DisGeNET" id="93190"/>
<dbReference type="GeneCards" id="CFAP107"/>
<dbReference type="HGNC" id="HGNC:28567">
    <property type="gene designation" value="CFAP107"/>
</dbReference>
<dbReference type="HPA" id="ENSG00000157330">
    <property type="expression patterns" value="Group enriched (choroid plexus, fallopian tube, testis)"/>
</dbReference>
<dbReference type="neXtProt" id="NX_Q8N1D5"/>
<dbReference type="OpenTargets" id="ENSG00000157330"/>
<dbReference type="VEuPathDB" id="HostDB:ENSG00000157330"/>
<dbReference type="eggNOG" id="ENOG502RZRC">
    <property type="taxonomic scope" value="Eukaryota"/>
</dbReference>
<dbReference type="GeneTree" id="ENSGT00390000014553"/>
<dbReference type="InParanoid" id="Q8N1D5"/>
<dbReference type="OMA" id="EKTPQCI"/>
<dbReference type="OrthoDB" id="8185227at2759"/>
<dbReference type="PAN-GO" id="Q8N1D5">
    <property type="GO annotations" value="0 GO annotations based on evolutionary models"/>
</dbReference>
<dbReference type="PhylomeDB" id="Q8N1D5"/>
<dbReference type="TreeFam" id="TF328903"/>
<dbReference type="PathwayCommons" id="Q8N1D5"/>
<dbReference type="BioGRID-ORCS" id="93190">
    <property type="hits" value="12 hits in 1118 CRISPR screens"/>
</dbReference>
<dbReference type="GenomeRNAi" id="93190"/>
<dbReference type="Pharos" id="Q8N1D5">
    <property type="development level" value="Tdark"/>
</dbReference>
<dbReference type="PRO" id="PR:Q8N1D5"/>
<dbReference type="Proteomes" id="UP000005640">
    <property type="component" value="Chromosome 1"/>
</dbReference>
<dbReference type="RNAct" id="Q8N1D5">
    <property type="molecule type" value="protein"/>
</dbReference>
<dbReference type="Bgee" id="ENSG00000157330">
    <property type="expression patterns" value="Expressed in right uterine tube and 78 other cell types or tissues"/>
</dbReference>
<dbReference type="ExpressionAtlas" id="Q8N1D5">
    <property type="expression patterns" value="baseline and differential"/>
</dbReference>
<dbReference type="GO" id="GO:0160111">
    <property type="term" value="C:axonemal A tubule inner sheath"/>
    <property type="evidence" value="ECO:0000250"/>
    <property type="project" value="UniProtKB"/>
</dbReference>
<dbReference type="GO" id="GO:0005879">
    <property type="term" value="C:axonemal microtubule"/>
    <property type="evidence" value="ECO:0000314"/>
    <property type="project" value="UniProtKB"/>
</dbReference>
<dbReference type="GO" id="GO:0036126">
    <property type="term" value="C:sperm flagellum"/>
    <property type="evidence" value="ECO:0000250"/>
    <property type="project" value="UniProtKB"/>
</dbReference>
<dbReference type="GO" id="GO:0030317">
    <property type="term" value="P:flagellated sperm motility"/>
    <property type="evidence" value="ECO:0000250"/>
    <property type="project" value="UniProtKB"/>
</dbReference>
<dbReference type="InterPro" id="IPR054709">
    <property type="entry name" value="CFAP107"/>
</dbReference>
<dbReference type="InterPro" id="IPR037662">
    <property type="entry name" value="CFAP68/107"/>
</dbReference>
<dbReference type="PANTHER" id="PTHR31180:SF2">
    <property type="entry name" value="CILIA- AND FLAGELLA-ASSOCIATED PROTEIN 107"/>
    <property type="match status" value="1"/>
</dbReference>
<dbReference type="PANTHER" id="PTHR31180">
    <property type="entry name" value="CILIA- AND FLAGELLA-ASSOCIATED PROTEIN 107-RELATED"/>
    <property type="match status" value="1"/>
</dbReference>
<dbReference type="Pfam" id="PF22595">
    <property type="entry name" value="CFAP107"/>
    <property type="match status" value="1"/>
</dbReference>
<reference key="1">
    <citation type="journal article" date="2006" name="Nature">
        <title>The DNA sequence and biological annotation of human chromosome 1.</title>
        <authorList>
            <person name="Gregory S.G."/>
            <person name="Barlow K.F."/>
            <person name="McLay K.E."/>
            <person name="Kaul R."/>
            <person name="Swarbreck D."/>
            <person name="Dunham A."/>
            <person name="Scott C.E."/>
            <person name="Howe K.L."/>
            <person name="Woodfine K."/>
            <person name="Spencer C.C.A."/>
            <person name="Jones M.C."/>
            <person name="Gillson C."/>
            <person name="Searle S."/>
            <person name="Zhou Y."/>
            <person name="Kokocinski F."/>
            <person name="McDonald L."/>
            <person name="Evans R."/>
            <person name="Phillips K."/>
            <person name="Atkinson A."/>
            <person name="Cooper R."/>
            <person name="Jones C."/>
            <person name="Hall R.E."/>
            <person name="Andrews T.D."/>
            <person name="Lloyd C."/>
            <person name="Ainscough R."/>
            <person name="Almeida J.P."/>
            <person name="Ambrose K.D."/>
            <person name="Anderson F."/>
            <person name="Andrew R.W."/>
            <person name="Ashwell R.I.S."/>
            <person name="Aubin K."/>
            <person name="Babbage A.K."/>
            <person name="Bagguley C.L."/>
            <person name="Bailey J."/>
            <person name="Beasley H."/>
            <person name="Bethel G."/>
            <person name="Bird C.P."/>
            <person name="Bray-Allen S."/>
            <person name="Brown J.Y."/>
            <person name="Brown A.J."/>
            <person name="Buckley D."/>
            <person name="Burton J."/>
            <person name="Bye J."/>
            <person name="Carder C."/>
            <person name="Chapman J.C."/>
            <person name="Clark S.Y."/>
            <person name="Clarke G."/>
            <person name="Clee C."/>
            <person name="Cobley V."/>
            <person name="Collier R.E."/>
            <person name="Corby N."/>
            <person name="Coville G.J."/>
            <person name="Davies J."/>
            <person name="Deadman R."/>
            <person name="Dunn M."/>
            <person name="Earthrowl M."/>
            <person name="Ellington A.G."/>
            <person name="Errington H."/>
            <person name="Frankish A."/>
            <person name="Frankland J."/>
            <person name="French L."/>
            <person name="Garner P."/>
            <person name="Garnett J."/>
            <person name="Gay L."/>
            <person name="Ghori M.R.J."/>
            <person name="Gibson R."/>
            <person name="Gilby L.M."/>
            <person name="Gillett W."/>
            <person name="Glithero R.J."/>
            <person name="Grafham D.V."/>
            <person name="Griffiths C."/>
            <person name="Griffiths-Jones S."/>
            <person name="Grocock R."/>
            <person name="Hammond S."/>
            <person name="Harrison E.S.I."/>
            <person name="Hart E."/>
            <person name="Haugen E."/>
            <person name="Heath P.D."/>
            <person name="Holmes S."/>
            <person name="Holt K."/>
            <person name="Howden P.J."/>
            <person name="Hunt A.R."/>
            <person name="Hunt S.E."/>
            <person name="Hunter G."/>
            <person name="Isherwood J."/>
            <person name="James R."/>
            <person name="Johnson C."/>
            <person name="Johnson D."/>
            <person name="Joy A."/>
            <person name="Kay M."/>
            <person name="Kershaw J.K."/>
            <person name="Kibukawa M."/>
            <person name="Kimberley A.M."/>
            <person name="King A."/>
            <person name="Knights A.J."/>
            <person name="Lad H."/>
            <person name="Laird G."/>
            <person name="Lawlor S."/>
            <person name="Leongamornlert D.A."/>
            <person name="Lloyd D.M."/>
            <person name="Loveland J."/>
            <person name="Lovell J."/>
            <person name="Lush M.J."/>
            <person name="Lyne R."/>
            <person name="Martin S."/>
            <person name="Mashreghi-Mohammadi M."/>
            <person name="Matthews L."/>
            <person name="Matthews N.S.W."/>
            <person name="McLaren S."/>
            <person name="Milne S."/>
            <person name="Mistry S."/>
            <person name="Moore M.J.F."/>
            <person name="Nickerson T."/>
            <person name="O'Dell C.N."/>
            <person name="Oliver K."/>
            <person name="Palmeiri A."/>
            <person name="Palmer S.A."/>
            <person name="Parker A."/>
            <person name="Patel D."/>
            <person name="Pearce A.V."/>
            <person name="Peck A.I."/>
            <person name="Pelan S."/>
            <person name="Phelps K."/>
            <person name="Phillimore B.J."/>
            <person name="Plumb R."/>
            <person name="Rajan J."/>
            <person name="Raymond C."/>
            <person name="Rouse G."/>
            <person name="Saenphimmachak C."/>
            <person name="Sehra H.K."/>
            <person name="Sheridan E."/>
            <person name="Shownkeen R."/>
            <person name="Sims S."/>
            <person name="Skuce C.D."/>
            <person name="Smith M."/>
            <person name="Steward C."/>
            <person name="Subramanian S."/>
            <person name="Sycamore N."/>
            <person name="Tracey A."/>
            <person name="Tromans A."/>
            <person name="Van Helmond Z."/>
            <person name="Wall M."/>
            <person name="Wallis J.M."/>
            <person name="White S."/>
            <person name="Whitehead S.L."/>
            <person name="Wilkinson J.E."/>
            <person name="Willey D.L."/>
            <person name="Williams H."/>
            <person name="Wilming L."/>
            <person name="Wray P.W."/>
            <person name="Wu Z."/>
            <person name="Coulson A."/>
            <person name="Vaudin M."/>
            <person name="Sulston J.E."/>
            <person name="Durbin R.M."/>
            <person name="Hubbard T."/>
            <person name="Wooster R."/>
            <person name="Dunham I."/>
            <person name="Carter N.P."/>
            <person name="McVean G."/>
            <person name="Ross M.T."/>
            <person name="Harrow J."/>
            <person name="Olson M.V."/>
            <person name="Beck S."/>
            <person name="Rogers J."/>
            <person name="Bentley D.R."/>
        </authorList>
    </citation>
    <scope>NUCLEOTIDE SEQUENCE [LARGE SCALE GENOMIC DNA]</scope>
</reference>
<reference key="2">
    <citation type="journal article" date="2004" name="Genome Res.">
        <title>The status, quality, and expansion of the NIH full-length cDNA project: the Mammalian Gene Collection (MGC).</title>
        <authorList>
            <consortium name="The MGC Project Team"/>
        </authorList>
    </citation>
    <scope>NUCLEOTIDE SEQUENCE [LARGE SCALE MRNA]</scope>
    <source>
        <tissue>Brain</tissue>
    </source>
</reference>
<reference key="3">
    <citation type="journal article" date="2024" name="Nat. Commun.">
        <title>Uncovering structural themes across cilia microtubule inner proteins with implications for human cilia function.</title>
        <authorList>
            <person name="Andersen J.S."/>
            <person name="Vijayakumaran A."/>
            <person name="Godbehere C."/>
            <person name="Lorentzen E."/>
            <person name="Mennella V."/>
            <person name="Schou K.B."/>
        </authorList>
    </citation>
    <scope>IDENTIFICATION OF MN REGIONS</scope>
</reference>
<reference evidence="5" key="4">
    <citation type="journal article" date="2022" name="Proc. Natl. Acad. Sci. U.S.A.">
        <title>SPACA9 is a lumenal protein of human ciliary singlet and doublet microtubules.</title>
        <authorList>
            <person name="Gui M."/>
            <person name="Croft J.T."/>
            <person name="Zabeo D."/>
            <person name="Acharya V."/>
            <person name="Kollman J.M."/>
            <person name="Burgoyne T."/>
            <person name="Hoog J.L."/>
            <person name="Brown A."/>
        </authorList>
    </citation>
    <scope>STRUCTURE BY ELECTRON MICROSCOPY (3.60 ANGSTROMS)</scope>
    <scope>FUNCTION</scope>
    <scope>SUBCELLULAR LOCATION</scope>
    <scope>TISSUE SPECIFICITY</scope>
</reference>
<accession>Q8N1D5</accession>
<accession>Q5VUY4</accession>
<keyword id="KW-0002">3D-structure</keyword>
<keyword id="KW-0966">Cell projection</keyword>
<keyword id="KW-0969">Cilium</keyword>
<keyword id="KW-0963">Cytoplasm</keyword>
<keyword id="KW-0206">Cytoskeleton</keyword>
<keyword id="KW-0282">Flagellum</keyword>
<keyword id="KW-1267">Proteomics identification</keyword>
<keyword id="KW-1185">Reference proteome</keyword>
<protein>
    <recommendedName>
        <fullName evidence="4">Cilia- and flagella-associated protein 107</fullName>
    </recommendedName>
</protein>
<evidence type="ECO:0000250" key="1">
    <source>
        <dbReference type="UniProtKB" id="Q4KKZ1"/>
    </source>
</evidence>
<evidence type="ECO:0000269" key="2">
    <source>
    </source>
</evidence>
<evidence type="ECO:0000305" key="3">
    <source>
    </source>
</evidence>
<evidence type="ECO:0000312" key="4">
    <source>
        <dbReference type="HGNC" id="HGNC:28567"/>
    </source>
</evidence>
<evidence type="ECO:0007744" key="5">
    <source>
        <dbReference type="PDB" id="7UNG"/>
    </source>
</evidence>
<feature type="chain" id="PRO_0000247260" description="Cilia- and flagella-associated protein 107">
    <location>
        <begin position="1"/>
        <end position="194"/>
    </location>
</feature>
<feature type="region of interest" description="Mn 1" evidence="3">
    <location>
        <begin position="45"/>
        <end position="60"/>
    </location>
</feature>
<feature type="region of interest" description="Mn 2" evidence="3">
    <location>
        <begin position="95"/>
        <end position="107"/>
    </location>
</feature>
<name>CF107_HUMAN</name>